<name>PA2HB_PSETE</name>
<feature type="chain" id="PRO_0000161695" description="Basic phospholipase A2 homolog textilotoxin B chain">
    <location>
        <begin position="1"/>
        <end position="121"/>
    </location>
</feature>
<feature type="disulfide bond" evidence="1">
    <location>
        <begin position="11"/>
        <end position="72"/>
    </location>
</feature>
<feature type="disulfide bond" evidence="1">
    <location>
        <begin position="27"/>
        <end position="120"/>
    </location>
</feature>
<feature type="disulfide bond" evidence="1">
    <location>
        <begin position="29"/>
        <end position="45"/>
    </location>
</feature>
<feature type="disulfide bond" evidence="1">
    <location>
        <begin position="44"/>
        <end position="101"/>
    </location>
</feature>
<feature type="disulfide bond" evidence="1">
    <location>
        <begin position="51"/>
        <end position="94"/>
    </location>
</feature>
<feature type="disulfide bond" evidence="1">
    <location>
        <begin position="61"/>
        <end position="87"/>
    </location>
</feature>
<feature type="disulfide bond" evidence="1">
    <location>
        <begin position="80"/>
        <end position="92"/>
    </location>
</feature>
<feature type="sequence conflict" description="In Ref. 2; AA sequence." evidence="4" ref="2">
    <original>D</original>
    <variation>N</variation>
    <location>
        <position position="1"/>
    </location>
</feature>
<feature type="sequence conflict" description="In Ref. 2; AA sequence." evidence="4" ref="2">
    <original>E</original>
    <variation>Q</variation>
    <location>
        <position position="4"/>
    </location>
</feature>
<feature type="sequence conflict" description="In Ref. 2; AA sequence." evidence="4" ref="2">
    <original>S</original>
    <variation>D</variation>
    <location>
        <position position="16"/>
    </location>
</feature>
<feature type="sequence conflict" description="In Ref. 2; AA sequence." evidence="4" ref="2">
    <original>D</original>
    <variation>N</variation>
    <location>
        <position position="24"/>
    </location>
</feature>
<sequence length="121" mass="13799">DLVEFGFMIRCANRNSQPAWQYMDYGCYCGKRGSGTPVDDVDRCCQTHNECYDEAAKIPGCKPKWTFYFYQCGSGSQFTCRKSKDVCRNVVCDCDFKAALCLTGARYNSANYNIDIKTHCR</sequence>
<keyword id="KW-0903">Direct protein sequencing</keyword>
<keyword id="KW-1015">Disulfide bond</keyword>
<keyword id="KW-0528">Neurotoxin</keyword>
<keyword id="KW-0638">Presynaptic neurotoxin</keyword>
<keyword id="KW-1185">Reference proteome</keyword>
<keyword id="KW-0964">Secreted</keyword>
<keyword id="KW-0800">Toxin</keyword>
<evidence type="ECO:0000250" key="1"/>
<evidence type="ECO:0000269" key="2">
    <source>
    </source>
</evidence>
<evidence type="ECO:0000269" key="3">
    <source>
    </source>
</evidence>
<evidence type="ECO:0000305" key="4"/>
<dbReference type="PIR" id="S29652">
    <property type="entry name" value="S29652"/>
</dbReference>
<dbReference type="SMR" id="P23027"/>
<dbReference type="Proteomes" id="UP000472273">
    <property type="component" value="Unplaced"/>
</dbReference>
<dbReference type="GO" id="GO:0005576">
    <property type="term" value="C:extracellular region"/>
    <property type="evidence" value="ECO:0007669"/>
    <property type="project" value="UniProtKB-SubCell"/>
</dbReference>
<dbReference type="GO" id="GO:0005509">
    <property type="term" value="F:calcium ion binding"/>
    <property type="evidence" value="ECO:0007669"/>
    <property type="project" value="InterPro"/>
</dbReference>
<dbReference type="GO" id="GO:0047498">
    <property type="term" value="F:calcium-dependent phospholipase A2 activity"/>
    <property type="evidence" value="ECO:0007669"/>
    <property type="project" value="TreeGrafter"/>
</dbReference>
<dbReference type="GO" id="GO:0005543">
    <property type="term" value="F:phospholipid binding"/>
    <property type="evidence" value="ECO:0007669"/>
    <property type="project" value="TreeGrafter"/>
</dbReference>
<dbReference type="GO" id="GO:0090729">
    <property type="term" value="F:toxin activity"/>
    <property type="evidence" value="ECO:0007669"/>
    <property type="project" value="UniProtKB-KW"/>
</dbReference>
<dbReference type="GO" id="GO:0050482">
    <property type="term" value="P:arachidonate secretion"/>
    <property type="evidence" value="ECO:0007669"/>
    <property type="project" value="InterPro"/>
</dbReference>
<dbReference type="GO" id="GO:0016042">
    <property type="term" value="P:lipid catabolic process"/>
    <property type="evidence" value="ECO:0007669"/>
    <property type="project" value="InterPro"/>
</dbReference>
<dbReference type="GO" id="GO:0006644">
    <property type="term" value="P:phospholipid metabolic process"/>
    <property type="evidence" value="ECO:0007669"/>
    <property type="project" value="InterPro"/>
</dbReference>
<dbReference type="CDD" id="cd00125">
    <property type="entry name" value="PLA2c"/>
    <property type="match status" value="1"/>
</dbReference>
<dbReference type="FunFam" id="1.20.90.10:FF:000007">
    <property type="entry name" value="Acidic phospholipase A2"/>
    <property type="match status" value="1"/>
</dbReference>
<dbReference type="Gene3D" id="1.20.90.10">
    <property type="entry name" value="Phospholipase A2 domain"/>
    <property type="match status" value="1"/>
</dbReference>
<dbReference type="InterPro" id="IPR001211">
    <property type="entry name" value="PLipase_A2"/>
</dbReference>
<dbReference type="InterPro" id="IPR033112">
    <property type="entry name" value="PLipase_A2_Asp_AS"/>
</dbReference>
<dbReference type="InterPro" id="IPR016090">
    <property type="entry name" value="PLipase_A2_dom"/>
</dbReference>
<dbReference type="InterPro" id="IPR036444">
    <property type="entry name" value="PLipase_A2_dom_sf"/>
</dbReference>
<dbReference type="InterPro" id="IPR033113">
    <property type="entry name" value="PLipase_A2_His_AS"/>
</dbReference>
<dbReference type="PANTHER" id="PTHR11716:SF51">
    <property type="entry name" value="PHOSPHOLIPASE A2"/>
    <property type="match status" value="1"/>
</dbReference>
<dbReference type="PANTHER" id="PTHR11716">
    <property type="entry name" value="PHOSPHOLIPASE A2 FAMILY MEMBER"/>
    <property type="match status" value="1"/>
</dbReference>
<dbReference type="Pfam" id="PF00068">
    <property type="entry name" value="Phospholip_A2_1"/>
    <property type="match status" value="1"/>
</dbReference>
<dbReference type="PRINTS" id="PR00389">
    <property type="entry name" value="PHPHLIPASEA2"/>
</dbReference>
<dbReference type="SMART" id="SM00085">
    <property type="entry name" value="PA2c"/>
    <property type="match status" value="1"/>
</dbReference>
<dbReference type="SUPFAM" id="SSF48619">
    <property type="entry name" value="Phospholipase A2, PLA2"/>
    <property type="match status" value="1"/>
</dbReference>
<dbReference type="PROSITE" id="PS00119">
    <property type="entry name" value="PA2_ASP"/>
    <property type="match status" value="1"/>
</dbReference>
<dbReference type="PROSITE" id="PS00118">
    <property type="entry name" value="PA2_HIS"/>
    <property type="match status" value="1"/>
</dbReference>
<accession>P23027</accession>
<protein>
    <recommendedName>
        <fullName>Basic phospholipase A2 homolog textilotoxin B chain</fullName>
        <shortName>svPLA2 homolog</shortName>
    </recommendedName>
</protein>
<comment type="function">
    <text evidence="3">Snake venom oligomeric phospholipase A2 that has potent presynaptic neurotoxicity. Chain B is not itself neurotoxic, but it is essential for the neurotoxicity of textilotoxin. Subunit B possesses a very low phospholipase activity.</text>
</comment>
<comment type="subunit">
    <text evidence="2 3">Heterohexamer. 2 forms exist: 2 A or 2 B chains, 2 C chains and 2 covalently-linked D chains, and 1 A or 1 B, 1 C, 2 covalently-linked D chains and 2 differentially glycosylated covalently-linked D chains. Textilotoxin was originally described as pentameric (PubMed:8431471).</text>
</comment>
<comment type="subcellular location">
    <subcellularLocation>
        <location>Secreted</location>
    </subcellularLocation>
</comment>
<comment type="tissue specificity">
    <text>Expressed by the venom gland.</text>
</comment>
<comment type="toxic dose">
    <text evidence="3">Oligomer: LD(50) is 1 ug/kg by intraperitoneal injection into mice.</text>
</comment>
<comment type="similarity">
    <text evidence="4">Belongs to the phospholipase A2 family. Group I subfamily. N49 sub-subfamily.</text>
</comment>
<reference key="1">
    <citation type="journal article" date="1993" name="Biochim. Biophys. Acta">
        <title>Studies on the subunit structure of textilotoxin, a potent presynaptic neurotoxin from the venom of the Australian common brown snake (Pseudonaja textilis). 3. The complete amino-acid sequences of all the subunits.</title>
        <authorList>
            <person name="Pearson J.A."/>
            <person name="Tyler M.I."/>
            <person name="Retson K.V."/>
            <person name="Howden M.E.H."/>
        </authorList>
    </citation>
    <scope>PROTEIN SEQUENCE</scope>
    <scope>FUNCTION</scope>
    <scope>TOXIC DOSE</scope>
    <source>
        <tissue>Venom</tissue>
    </source>
</reference>
<reference key="2">
    <citation type="journal article" date="1987" name="Biochim. Biophys. Acta">
        <title>Studies on the subunit structure of textilotoxin, a potent neurotoxin from the venom of the Australian common brown snake (Pseudonaja textilis).</title>
        <authorList>
            <person name="Tyler M.I."/>
            <person name="Barnett D."/>
            <person name="Nicholson P."/>
            <person name="Spence I."/>
            <person name="Howden M.E.H."/>
        </authorList>
    </citation>
    <scope>PROTEIN SEQUENCE OF 1-26</scope>
    <source>
        <tissue>Venom</tissue>
    </source>
</reference>
<reference key="3">
    <citation type="journal article" date="2006" name="Mol. Cell. Proteomics">
        <title>Molecular diversity in venom from the Australian Brown snake, Pseudonaja textilis.</title>
        <authorList>
            <person name="Birrell G.W."/>
            <person name="Earl S."/>
            <person name="Masci P.P."/>
            <person name="de Jersey J."/>
            <person name="Wallis T.P."/>
            <person name="Gorman J.J."/>
            <person name="Lavin M.F."/>
        </authorList>
    </citation>
    <scope>IDENTIFICATION BY MASS SPECTROMETRY</scope>
    <source>
        <tissue>Venom</tissue>
    </source>
</reference>
<reference key="4">
    <citation type="journal article" date="2009" name="Proteins">
        <title>The major toxin from the Australian common brown snake is a hexamer with unusual gas-phase dissociation properties.</title>
        <authorList>
            <person name="Aquilina J.A."/>
        </authorList>
    </citation>
    <scope>SUBUNIT</scope>
    <scope>IDENTIFICATION BY MASS SPECTROMETRY</scope>
    <source>
        <tissue>Venom</tissue>
    </source>
</reference>
<proteinExistence type="evidence at protein level"/>
<organism>
    <name type="scientific">Pseudonaja textilis</name>
    <name type="common">Eastern brown snake</name>
    <dbReference type="NCBI Taxonomy" id="8673"/>
    <lineage>
        <taxon>Eukaryota</taxon>
        <taxon>Metazoa</taxon>
        <taxon>Chordata</taxon>
        <taxon>Craniata</taxon>
        <taxon>Vertebrata</taxon>
        <taxon>Euteleostomi</taxon>
        <taxon>Lepidosauria</taxon>
        <taxon>Squamata</taxon>
        <taxon>Bifurcata</taxon>
        <taxon>Unidentata</taxon>
        <taxon>Episquamata</taxon>
        <taxon>Toxicofera</taxon>
        <taxon>Serpentes</taxon>
        <taxon>Colubroidea</taxon>
        <taxon>Elapidae</taxon>
        <taxon>Hydrophiinae</taxon>
        <taxon>Pseudonaja</taxon>
    </lineage>
</organism>